<reference key="1">
    <citation type="journal article" date="1999" name="Nature">
        <title>Genomic sequence comparison of two unrelated isolates of the human gastric pathogen Helicobacter pylori.</title>
        <authorList>
            <person name="Alm R.A."/>
            <person name="Ling L.-S.L."/>
            <person name="Moir D.T."/>
            <person name="King B.L."/>
            <person name="Brown E.D."/>
            <person name="Doig P.C."/>
            <person name="Smith D.R."/>
            <person name="Noonan B."/>
            <person name="Guild B.C."/>
            <person name="deJonge B.L."/>
            <person name="Carmel G."/>
            <person name="Tummino P.J."/>
            <person name="Caruso A."/>
            <person name="Uria-Nickelsen M."/>
            <person name="Mills D.M."/>
            <person name="Ives C."/>
            <person name="Gibson R."/>
            <person name="Merberg D."/>
            <person name="Mills S.D."/>
            <person name="Jiang Q."/>
            <person name="Taylor D.E."/>
            <person name="Vovis G.F."/>
            <person name="Trust T.J."/>
        </authorList>
    </citation>
    <scope>NUCLEOTIDE SEQUENCE [LARGE SCALE GENOMIC DNA]</scope>
    <source>
        <strain>J99 / ATCC 700824</strain>
    </source>
</reference>
<accession>Q9ZJL8</accession>
<protein>
    <recommendedName>
        <fullName evidence="1">ATP-dependent Clp protease ATP-binding subunit ClpX</fullName>
    </recommendedName>
</protein>
<organism>
    <name type="scientific">Helicobacter pylori (strain J99 / ATCC 700824)</name>
    <name type="common">Campylobacter pylori J99</name>
    <dbReference type="NCBI Taxonomy" id="85963"/>
    <lineage>
        <taxon>Bacteria</taxon>
        <taxon>Pseudomonadati</taxon>
        <taxon>Campylobacterota</taxon>
        <taxon>Epsilonproteobacteria</taxon>
        <taxon>Campylobacterales</taxon>
        <taxon>Helicobacteraceae</taxon>
        <taxon>Helicobacter</taxon>
    </lineage>
</organism>
<name>CLPX_HELPJ</name>
<keyword id="KW-0067">ATP-binding</keyword>
<keyword id="KW-0143">Chaperone</keyword>
<keyword id="KW-0479">Metal-binding</keyword>
<keyword id="KW-0547">Nucleotide-binding</keyword>
<keyword id="KW-0862">Zinc</keyword>
<sequence>MNETLYCSFCKKPESRDPKKRRIIFASNLNKDVCVCEYCIDVMHGELHKYDSKYDRMDSLLALKRDRLRRMESSAYEEEFLLSRIPAPKELKAVLDNYVIGQEQAKKVFSVAVYNHYKRLSFKEKLKKQDNQDSDLELEHLEEVELSKSNILLIGPTGSGKTLMAQTLAKHLDIPIAISDATSLTEAGYVGEDVENILTRLLQASDWNVQKAQKGIVFIDEIDKISRLSEHRSITRDVSGEGVQQALLKIVEGSLVNIPPKGGRKHPEGNFIQIDTSDILFICAGAFDGLAEIIKKRTTQNVLGFTQEKMSKKEQEAILHLVQTHDLVTYGLIPELIGRLPVLSTLDSISLEAMVDILQKPKNALIKQYQQLFKMDEVDLIFEEEAIKEIAKLALERKTGARGLRAIIEDFCLDIMFDLPKLKGSEVRITKDCVLKQAEPLIIAKTHSKILP</sequence>
<feature type="chain" id="PRO_0000160366" description="ATP-dependent Clp protease ATP-binding subunit ClpX">
    <location>
        <begin position="1"/>
        <end position="452"/>
    </location>
</feature>
<feature type="domain" description="ClpX-type ZB" evidence="2">
    <location>
        <begin position="1"/>
        <end position="55"/>
    </location>
</feature>
<feature type="binding site" evidence="2">
    <location>
        <position position="7"/>
    </location>
    <ligand>
        <name>Zn(2+)</name>
        <dbReference type="ChEBI" id="CHEBI:29105"/>
    </ligand>
</feature>
<feature type="binding site" evidence="2">
    <location>
        <position position="10"/>
    </location>
    <ligand>
        <name>Zn(2+)</name>
        <dbReference type="ChEBI" id="CHEBI:29105"/>
    </ligand>
</feature>
<feature type="binding site" evidence="2">
    <location>
        <position position="36"/>
    </location>
    <ligand>
        <name>Zn(2+)</name>
        <dbReference type="ChEBI" id="CHEBI:29105"/>
    </ligand>
</feature>
<feature type="binding site" evidence="2">
    <location>
        <position position="39"/>
    </location>
    <ligand>
        <name>Zn(2+)</name>
        <dbReference type="ChEBI" id="CHEBI:29105"/>
    </ligand>
</feature>
<feature type="binding site" evidence="1">
    <location>
        <begin position="156"/>
        <end position="163"/>
    </location>
    <ligand>
        <name>ATP</name>
        <dbReference type="ChEBI" id="CHEBI:30616"/>
    </ligand>
</feature>
<gene>
    <name evidence="1" type="primary">clpX</name>
    <name type="ordered locus">jhp_1288</name>
</gene>
<comment type="function">
    <text evidence="1">ATP-dependent specificity component of the Clp protease. It directs the protease to specific substrates. Can perform chaperone functions in the absence of ClpP.</text>
</comment>
<comment type="subunit">
    <text evidence="1">Component of the ClpX-ClpP complex. Forms a hexameric ring that, in the presence of ATP, binds to fourteen ClpP subunits assembled into a disk-like structure with a central cavity, resembling the structure of eukaryotic proteasomes.</text>
</comment>
<comment type="similarity">
    <text evidence="1">Belongs to the ClpX chaperone family.</text>
</comment>
<evidence type="ECO:0000255" key="1">
    <source>
        <dbReference type="HAMAP-Rule" id="MF_00175"/>
    </source>
</evidence>
<evidence type="ECO:0000255" key="2">
    <source>
        <dbReference type="PROSITE-ProRule" id="PRU01250"/>
    </source>
</evidence>
<proteinExistence type="inferred from homology"/>
<dbReference type="EMBL" id="AE001439">
    <property type="protein sequence ID" value="AAD06862.1"/>
    <property type="molecule type" value="Genomic_DNA"/>
</dbReference>
<dbReference type="PIR" id="F71826">
    <property type="entry name" value="F71826"/>
</dbReference>
<dbReference type="RefSeq" id="WP_001006335.1">
    <property type="nucleotide sequence ID" value="NC_000921.1"/>
</dbReference>
<dbReference type="SMR" id="Q9ZJL8"/>
<dbReference type="KEGG" id="hpj:jhp_1288"/>
<dbReference type="eggNOG" id="COG1219">
    <property type="taxonomic scope" value="Bacteria"/>
</dbReference>
<dbReference type="Proteomes" id="UP000000804">
    <property type="component" value="Chromosome"/>
</dbReference>
<dbReference type="GO" id="GO:0009376">
    <property type="term" value="C:HslUV protease complex"/>
    <property type="evidence" value="ECO:0007669"/>
    <property type="project" value="TreeGrafter"/>
</dbReference>
<dbReference type="GO" id="GO:0005524">
    <property type="term" value="F:ATP binding"/>
    <property type="evidence" value="ECO:0007669"/>
    <property type="project" value="UniProtKB-UniRule"/>
</dbReference>
<dbReference type="GO" id="GO:0016887">
    <property type="term" value="F:ATP hydrolysis activity"/>
    <property type="evidence" value="ECO:0007669"/>
    <property type="project" value="InterPro"/>
</dbReference>
<dbReference type="GO" id="GO:0140662">
    <property type="term" value="F:ATP-dependent protein folding chaperone"/>
    <property type="evidence" value="ECO:0007669"/>
    <property type="project" value="InterPro"/>
</dbReference>
<dbReference type="GO" id="GO:0046983">
    <property type="term" value="F:protein dimerization activity"/>
    <property type="evidence" value="ECO:0007669"/>
    <property type="project" value="InterPro"/>
</dbReference>
<dbReference type="GO" id="GO:0051082">
    <property type="term" value="F:unfolded protein binding"/>
    <property type="evidence" value="ECO:0007669"/>
    <property type="project" value="UniProtKB-UniRule"/>
</dbReference>
<dbReference type="GO" id="GO:0008270">
    <property type="term" value="F:zinc ion binding"/>
    <property type="evidence" value="ECO:0007669"/>
    <property type="project" value="InterPro"/>
</dbReference>
<dbReference type="GO" id="GO:0051301">
    <property type="term" value="P:cell division"/>
    <property type="evidence" value="ECO:0007669"/>
    <property type="project" value="TreeGrafter"/>
</dbReference>
<dbReference type="GO" id="GO:0051603">
    <property type="term" value="P:proteolysis involved in protein catabolic process"/>
    <property type="evidence" value="ECO:0007669"/>
    <property type="project" value="TreeGrafter"/>
</dbReference>
<dbReference type="CDD" id="cd19497">
    <property type="entry name" value="RecA-like_ClpX"/>
    <property type="match status" value="1"/>
</dbReference>
<dbReference type="FunFam" id="1.10.8.60:FF:000002">
    <property type="entry name" value="ATP-dependent Clp protease ATP-binding subunit ClpX"/>
    <property type="match status" value="1"/>
</dbReference>
<dbReference type="FunFam" id="3.40.50.300:FF:001911">
    <property type="entry name" value="ATP-dependent Clp protease ATP-binding subunit ClpX"/>
    <property type="match status" value="1"/>
</dbReference>
<dbReference type="Gene3D" id="1.10.8.60">
    <property type="match status" value="1"/>
</dbReference>
<dbReference type="Gene3D" id="3.40.50.300">
    <property type="entry name" value="P-loop containing nucleotide triphosphate hydrolases"/>
    <property type="match status" value="1"/>
</dbReference>
<dbReference type="HAMAP" id="MF_00175">
    <property type="entry name" value="ClpX"/>
    <property type="match status" value="1"/>
</dbReference>
<dbReference type="InterPro" id="IPR003593">
    <property type="entry name" value="AAA+_ATPase"/>
</dbReference>
<dbReference type="InterPro" id="IPR050052">
    <property type="entry name" value="ATP-dep_Clp_protease_ClpX"/>
</dbReference>
<dbReference type="InterPro" id="IPR003959">
    <property type="entry name" value="ATPase_AAA_core"/>
</dbReference>
<dbReference type="InterPro" id="IPR019489">
    <property type="entry name" value="Clp_ATPase_C"/>
</dbReference>
<dbReference type="InterPro" id="IPR004487">
    <property type="entry name" value="Clp_protease_ATP-bd_su_ClpX"/>
</dbReference>
<dbReference type="InterPro" id="IPR046425">
    <property type="entry name" value="ClpX_bact"/>
</dbReference>
<dbReference type="InterPro" id="IPR027417">
    <property type="entry name" value="P-loop_NTPase"/>
</dbReference>
<dbReference type="InterPro" id="IPR010603">
    <property type="entry name" value="Znf_CppX_C4"/>
</dbReference>
<dbReference type="NCBIfam" id="TIGR00382">
    <property type="entry name" value="clpX"/>
    <property type="match status" value="1"/>
</dbReference>
<dbReference type="NCBIfam" id="NF003745">
    <property type="entry name" value="PRK05342.1"/>
    <property type="match status" value="1"/>
</dbReference>
<dbReference type="PANTHER" id="PTHR48102:SF7">
    <property type="entry name" value="ATP-DEPENDENT CLP PROTEASE ATP-BINDING SUBUNIT CLPX-LIKE, MITOCHONDRIAL"/>
    <property type="match status" value="1"/>
</dbReference>
<dbReference type="PANTHER" id="PTHR48102">
    <property type="entry name" value="ATP-DEPENDENT CLP PROTEASE ATP-BINDING SUBUNIT CLPX-LIKE, MITOCHONDRIAL-RELATED"/>
    <property type="match status" value="1"/>
</dbReference>
<dbReference type="Pfam" id="PF07724">
    <property type="entry name" value="AAA_2"/>
    <property type="match status" value="1"/>
</dbReference>
<dbReference type="Pfam" id="PF10431">
    <property type="entry name" value="ClpB_D2-small"/>
    <property type="match status" value="1"/>
</dbReference>
<dbReference type="SMART" id="SM00382">
    <property type="entry name" value="AAA"/>
    <property type="match status" value="1"/>
</dbReference>
<dbReference type="SMART" id="SM01086">
    <property type="entry name" value="ClpB_D2-small"/>
    <property type="match status" value="1"/>
</dbReference>
<dbReference type="SMART" id="SM00994">
    <property type="entry name" value="zf-C4_ClpX"/>
    <property type="match status" value="1"/>
</dbReference>
<dbReference type="SUPFAM" id="SSF52540">
    <property type="entry name" value="P-loop containing nucleoside triphosphate hydrolases"/>
    <property type="match status" value="1"/>
</dbReference>
<dbReference type="PROSITE" id="PS51902">
    <property type="entry name" value="CLPX_ZB"/>
    <property type="match status" value="1"/>
</dbReference>